<sequence>MAKIKARDLRGKKKEELLKQLDDLKVELSQLRVAKVTGGAASKLSKIRVVRKSIARVLTVINQTQKENLRKFYKGKKYKPLDLRPKKTRAIRRQLTKHEENLMTKKMQRKSRLYSIRKFAVKA</sequence>
<comment type="function">
    <text evidence="1 2 3">Component of the large ribosomal subunit. The ribosome is a large ribonucleoprotein complex responsible for the synthesis of proteins in the cell (By similarity). Plays an essential role in early embryonic development (PubMed:12006978). May act as a haploinsufficient tumor suppressor (PubMed:15138505).</text>
</comment>
<comment type="subunit">
    <text evidence="1">Component of the large ribosomal subunit.</text>
</comment>
<comment type="subcellular location">
    <subcellularLocation>
        <location evidence="1">Cytoplasm</location>
    </subcellularLocation>
</comment>
<comment type="disruption phenotype">
    <text evidence="2">Embryos show various defects including an inflated hindbrain ventricle and smaller head and eyes. Mutant adults show an increased incidence of cancer, notably malignant peripheral nerve sheath tumors.</text>
</comment>
<comment type="similarity">
    <text evidence="4">Belongs to the universal ribosomal protein uL29 family.</text>
</comment>
<keyword id="KW-0002">3D-structure</keyword>
<keyword id="KW-0963">Cytoplasm</keyword>
<keyword id="KW-0217">Developmental protein</keyword>
<keyword id="KW-1185">Reference proteome</keyword>
<keyword id="KW-0687">Ribonucleoprotein</keyword>
<keyword id="KW-0689">Ribosomal protein</keyword>
<keyword id="KW-0043">Tumor suppressor</keyword>
<organism>
    <name type="scientific">Danio rerio</name>
    <name type="common">Zebrafish</name>
    <name type="synonym">Brachydanio rerio</name>
    <dbReference type="NCBI Taxonomy" id="7955"/>
    <lineage>
        <taxon>Eukaryota</taxon>
        <taxon>Metazoa</taxon>
        <taxon>Chordata</taxon>
        <taxon>Craniata</taxon>
        <taxon>Vertebrata</taxon>
        <taxon>Euteleostomi</taxon>
        <taxon>Actinopterygii</taxon>
        <taxon>Neopterygii</taxon>
        <taxon>Teleostei</taxon>
        <taxon>Ostariophysi</taxon>
        <taxon>Cypriniformes</taxon>
        <taxon>Danionidae</taxon>
        <taxon>Danioninae</taxon>
        <taxon>Danio</taxon>
    </lineage>
</organism>
<evidence type="ECO:0000250" key="1">
    <source>
        <dbReference type="UniProtKB" id="P42766"/>
    </source>
</evidence>
<evidence type="ECO:0000269" key="2">
    <source>
    </source>
</evidence>
<evidence type="ECO:0000269" key="3">
    <source>
    </source>
</evidence>
<evidence type="ECO:0000305" key="4"/>
<dbReference type="EMBL" id="AF506205">
    <property type="protein sequence ID" value="AAM34649.1"/>
    <property type="molecule type" value="mRNA"/>
</dbReference>
<dbReference type="EMBL" id="BC055640">
    <property type="protein sequence ID" value="AAH55640.1"/>
    <property type="molecule type" value="mRNA"/>
</dbReference>
<dbReference type="RefSeq" id="NP_775340.1">
    <property type="nucleotide sequence ID" value="NM_173233.2"/>
</dbReference>
<dbReference type="PDB" id="7OYA">
    <property type="method" value="EM"/>
    <property type="resolution" value="3.20 A"/>
    <property type="chains" value="h1=1-123"/>
</dbReference>
<dbReference type="PDB" id="7OYB">
    <property type="method" value="EM"/>
    <property type="resolution" value="2.40 A"/>
    <property type="chains" value="h1=1-123"/>
</dbReference>
<dbReference type="PDBsum" id="7OYA"/>
<dbReference type="PDBsum" id="7OYB"/>
<dbReference type="EMDB" id="EMD-13111"/>
<dbReference type="EMDB" id="EMD-13112"/>
<dbReference type="SMR" id="Q8JHJ1"/>
<dbReference type="FunCoup" id="Q8JHJ1">
    <property type="interactions" value="1919"/>
</dbReference>
<dbReference type="STRING" id="7955.ENSDARP00000018594"/>
<dbReference type="PaxDb" id="7955-ENSDARP00000018594"/>
<dbReference type="Ensembl" id="ENSDART00000009241">
    <property type="protein sequence ID" value="ENSDARP00000018594"/>
    <property type="gene ID" value="ENSDARG00000018334"/>
</dbReference>
<dbReference type="GeneID" id="192299"/>
<dbReference type="KEGG" id="dre:192299"/>
<dbReference type="AGR" id="ZFIN:ZDB-GENE-020419-2"/>
<dbReference type="CTD" id="11224"/>
<dbReference type="ZFIN" id="ZDB-GENE-020419-2">
    <property type="gene designation" value="rpl35"/>
</dbReference>
<dbReference type="eggNOG" id="KOG3436">
    <property type="taxonomic scope" value="Eukaryota"/>
</dbReference>
<dbReference type="HOGENOM" id="CLU_110381_1_1_1"/>
<dbReference type="InParanoid" id="Q8JHJ1"/>
<dbReference type="OMA" id="VMNQKAR"/>
<dbReference type="OrthoDB" id="528635at2759"/>
<dbReference type="PhylomeDB" id="Q8JHJ1"/>
<dbReference type="TreeFam" id="TF314951"/>
<dbReference type="Reactome" id="R-DRE-156827">
    <property type="pathway name" value="L13a-mediated translational silencing of Ceruloplasmin expression"/>
</dbReference>
<dbReference type="Reactome" id="R-DRE-1799339">
    <property type="pathway name" value="SRP-dependent cotranslational protein targeting to membrane"/>
</dbReference>
<dbReference type="Reactome" id="R-DRE-72689">
    <property type="pathway name" value="Formation of a pool of free 40S subunits"/>
</dbReference>
<dbReference type="Reactome" id="R-DRE-975956">
    <property type="pathway name" value="Nonsense Mediated Decay (NMD) independent of the Exon Junction Complex (EJC)"/>
</dbReference>
<dbReference type="Reactome" id="R-DRE-975957">
    <property type="pathway name" value="Nonsense Mediated Decay (NMD) enhanced by the Exon Junction Complex (EJC)"/>
</dbReference>
<dbReference type="PRO" id="PR:Q8JHJ1"/>
<dbReference type="Proteomes" id="UP000000437">
    <property type="component" value="Chromosome 21"/>
</dbReference>
<dbReference type="Bgee" id="ENSDARG00000018334">
    <property type="expression patterns" value="Expressed in pharyngeal gill and 28 other cell types or tissues"/>
</dbReference>
<dbReference type="ExpressionAtlas" id="Q8JHJ1">
    <property type="expression patterns" value="baseline and differential"/>
</dbReference>
<dbReference type="GO" id="GO:0022625">
    <property type="term" value="C:cytosolic large ribosomal subunit"/>
    <property type="evidence" value="ECO:0000318"/>
    <property type="project" value="GO_Central"/>
</dbReference>
<dbReference type="GO" id="GO:0003729">
    <property type="term" value="F:mRNA binding"/>
    <property type="evidence" value="ECO:0000318"/>
    <property type="project" value="GO_Central"/>
</dbReference>
<dbReference type="GO" id="GO:0003735">
    <property type="term" value="F:structural constituent of ribosome"/>
    <property type="evidence" value="ECO:0000318"/>
    <property type="project" value="GO_Central"/>
</dbReference>
<dbReference type="GO" id="GO:0043009">
    <property type="term" value="P:chordate embryonic development"/>
    <property type="evidence" value="ECO:0000315"/>
    <property type="project" value="ZFIN"/>
</dbReference>
<dbReference type="GO" id="GO:0030218">
    <property type="term" value="P:erythrocyte differentiation"/>
    <property type="evidence" value="ECO:0000315"/>
    <property type="project" value="ZFIN"/>
</dbReference>
<dbReference type="GO" id="GO:0000463">
    <property type="term" value="P:maturation of LSU-rRNA from tricistronic rRNA transcript (SSU-rRNA, 5.8S rRNA, LSU-rRNA)"/>
    <property type="evidence" value="ECO:0000318"/>
    <property type="project" value="GO_Central"/>
</dbReference>
<dbReference type="GO" id="GO:0051726">
    <property type="term" value="P:regulation of cell cycle"/>
    <property type="evidence" value="ECO:0000315"/>
    <property type="project" value="ZFIN"/>
</dbReference>
<dbReference type="GO" id="GO:0006412">
    <property type="term" value="P:translation"/>
    <property type="evidence" value="ECO:0007669"/>
    <property type="project" value="InterPro"/>
</dbReference>
<dbReference type="CDD" id="cd00427">
    <property type="entry name" value="Ribosomal_L29_HIP"/>
    <property type="match status" value="1"/>
</dbReference>
<dbReference type="FunFam" id="1.10.287.310:FF:000002">
    <property type="entry name" value="60S ribosomal protein L35"/>
    <property type="match status" value="1"/>
</dbReference>
<dbReference type="FunFam" id="6.10.250.3450:FF:000001">
    <property type="entry name" value="60S ribosomal protein L35"/>
    <property type="match status" value="1"/>
</dbReference>
<dbReference type="Gene3D" id="1.10.287.310">
    <property type="match status" value="1"/>
</dbReference>
<dbReference type="Gene3D" id="6.10.250.3450">
    <property type="match status" value="1"/>
</dbReference>
<dbReference type="HAMAP" id="MF_00374">
    <property type="entry name" value="Ribosomal_uL29"/>
    <property type="match status" value="1"/>
</dbReference>
<dbReference type="InterPro" id="IPR001854">
    <property type="entry name" value="Ribosomal_uL29"/>
</dbReference>
<dbReference type="InterPro" id="IPR018254">
    <property type="entry name" value="Ribosomal_uL29_CS"/>
</dbReference>
<dbReference type="InterPro" id="IPR045059">
    <property type="entry name" value="Ribosomal_uL29_euk"/>
</dbReference>
<dbReference type="InterPro" id="IPR036049">
    <property type="entry name" value="Ribosomal_uL29_sf"/>
</dbReference>
<dbReference type="NCBIfam" id="TIGR00012">
    <property type="entry name" value="L29"/>
    <property type="match status" value="1"/>
</dbReference>
<dbReference type="PANTHER" id="PTHR45722">
    <property type="entry name" value="60S RIBOSOMAL PROTEIN L35"/>
    <property type="match status" value="1"/>
</dbReference>
<dbReference type="PANTHER" id="PTHR45722:SF2">
    <property type="entry name" value="LARGE RIBOSOMAL SUBUNIT PROTEIN UL29-RELATED"/>
    <property type="match status" value="1"/>
</dbReference>
<dbReference type="Pfam" id="PF00831">
    <property type="entry name" value="Ribosomal_L29"/>
    <property type="match status" value="1"/>
</dbReference>
<dbReference type="SUPFAM" id="SSF46561">
    <property type="entry name" value="Ribosomal protein L29 (L29p)"/>
    <property type="match status" value="1"/>
</dbReference>
<dbReference type="PROSITE" id="PS00579">
    <property type="entry name" value="RIBOSOMAL_L29"/>
    <property type="match status" value="1"/>
</dbReference>
<name>RL35_DANRE</name>
<feature type="chain" id="PRO_0000130537" description="Large ribosomal subunit protein uL29">
    <location>
        <begin position="1"/>
        <end position="123"/>
    </location>
</feature>
<gene>
    <name type="primary">rpl35</name>
</gene>
<proteinExistence type="evidence at protein level"/>
<reference key="1">
    <citation type="journal article" date="2002" name="Nat. Genet.">
        <title>Insertional mutagenesis in zebrafish rapidly identifies genes essential for early vertebrate development.</title>
        <authorList>
            <person name="Golling G."/>
            <person name="Amsterdam A."/>
            <person name="Sun Z."/>
            <person name="Antonelli M."/>
            <person name="Maldonado E."/>
            <person name="Chen W."/>
            <person name="Burgess S."/>
            <person name="Haldi M."/>
            <person name="Artzt K."/>
            <person name="Farrington S."/>
            <person name="Lin S.-Y."/>
            <person name="Nissen R.M."/>
            <person name="Hopkins N."/>
        </authorList>
    </citation>
    <scope>NUCLEOTIDE SEQUENCE [LARGE SCALE MRNA]</scope>
    <scope>FUNCTION</scope>
    <scope>DISRUPTION PHENOTYPE</scope>
    <source>
        <tissue>Embryo</tissue>
    </source>
</reference>
<reference key="2">
    <citation type="submission" date="2003-08" db="EMBL/GenBank/DDBJ databases">
        <authorList>
            <consortium name="NIH - Zebrafish Gene Collection (ZGC) project"/>
        </authorList>
    </citation>
    <scope>NUCLEOTIDE SEQUENCE [LARGE SCALE MRNA]</scope>
    <source>
        <strain>SJD</strain>
    </source>
</reference>
<reference key="3">
    <citation type="journal article" date="2004" name="PLoS Biol.">
        <title>Many ribosomal protein genes are cancer genes in zebrafish.</title>
        <authorList>
            <person name="Amsterdam A."/>
            <person name="Sadler K.C."/>
            <person name="Lai K."/>
            <person name="Farrington S."/>
            <person name="Bronson R.T."/>
            <person name="Lees J.A."/>
            <person name="Hopkins N."/>
        </authorList>
    </citation>
    <scope>FUNCTION</scope>
</reference>
<protein>
    <recommendedName>
        <fullName evidence="4">Large ribosomal subunit protein uL29</fullName>
    </recommendedName>
    <alternativeName>
        <fullName>60S ribosomal protein L35</fullName>
    </alternativeName>
</protein>
<accession>Q8JHJ1</accession>